<comment type="function">
    <text evidence="1">Forms part of the ribosomal stalk which helps the ribosome interact with GTP-bound translation factors.</text>
</comment>
<comment type="subunit">
    <text evidence="1">Part of the ribosomal stalk of the 50S ribosomal subunit. Interacts with L10 and the large rRNA to form the base of the stalk. L10 forms an elongated spine to which L12 dimers bind in a sequential fashion forming a multimeric L10(L12)X complex.</text>
</comment>
<comment type="PTM">
    <text evidence="1">One or more lysine residues are methylated.</text>
</comment>
<comment type="similarity">
    <text evidence="1">Belongs to the universal ribosomal protein uL11 family.</text>
</comment>
<organism>
    <name type="scientific">Neisseria meningitidis serogroup A / serotype 4A (strain DSM 15465 / Z2491)</name>
    <dbReference type="NCBI Taxonomy" id="122587"/>
    <lineage>
        <taxon>Bacteria</taxon>
        <taxon>Pseudomonadati</taxon>
        <taxon>Pseudomonadota</taxon>
        <taxon>Betaproteobacteria</taxon>
        <taxon>Neisseriales</taxon>
        <taxon>Neisseriaceae</taxon>
        <taxon>Neisseria</taxon>
    </lineage>
</organism>
<dbReference type="EMBL" id="AL157959">
    <property type="protein sequence ID" value="CAM07464.1"/>
    <property type="molecule type" value="Genomic_DNA"/>
</dbReference>
<dbReference type="PIR" id="H82007">
    <property type="entry name" value="H82007"/>
</dbReference>
<dbReference type="RefSeq" id="WP_002220151.1">
    <property type="nucleotide sequence ID" value="NC_003116.1"/>
</dbReference>
<dbReference type="SMR" id="Q9JX02"/>
<dbReference type="EnsemblBacteria" id="CAM07464">
    <property type="protein sequence ID" value="CAM07464"/>
    <property type="gene ID" value="NMA0146"/>
</dbReference>
<dbReference type="GeneID" id="93387203"/>
<dbReference type="KEGG" id="nma:NMA0146"/>
<dbReference type="HOGENOM" id="CLU_074237_2_0_4"/>
<dbReference type="Proteomes" id="UP000000626">
    <property type="component" value="Chromosome"/>
</dbReference>
<dbReference type="GO" id="GO:0022625">
    <property type="term" value="C:cytosolic large ribosomal subunit"/>
    <property type="evidence" value="ECO:0007669"/>
    <property type="project" value="TreeGrafter"/>
</dbReference>
<dbReference type="GO" id="GO:0070180">
    <property type="term" value="F:large ribosomal subunit rRNA binding"/>
    <property type="evidence" value="ECO:0007669"/>
    <property type="project" value="UniProtKB-UniRule"/>
</dbReference>
<dbReference type="GO" id="GO:0003735">
    <property type="term" value="F:structural constituent of ribosome"/>
    <property type="evidence" value="ECO:0007669"/>
    <property type="project" value="InterPro"/>
</dbReference>
<dbReference type="GO" id="GO:0006412">
    <property type="term" value="P:translation"/>
    <property type="evidence" value="ECO:0007669"/>
    <property type="project" value="UniProtKB-UniRule"/>
</dbReference>
<dbReference type="CDD" id="cd00349">
    <property type="entry name" value="Ribosomal_L11"/>
    <property type="match status" value="1"/>
</dbReference>
<dbReference type="FunFam" id="1.10.10.250:FF:000001">
    <property type="entry name" value="50S ribosomal protein L11"/>
    <property type="match status" value="1"/>
</dbReference>
<dbReference type="FunFam" id="3.30.1550.10:FF:000001">
    <property type="entry name" value="50S ribosomal protein L11"/>
    <property type="match status" value="1"/>
</dbReference>
<dbReference type="Gene3D" id="1.10.10.250">
    <property type="entry name" value="Ribosomal protein L11, C-terminal domain"/>
    <property type="match status" value="1"/>
</dbReference>
<dbReference type="Gene3D" id="3.30.1550.10">
    <property type="entry name" value="Ribosomal protein L11/L12, N-terminal domain"/>
    <property type="match status" value="1"/>
</dbReference>
<dbReference type="HAMAP" id="MF_00736">
    <property type="entry name" value="Ribosomal_uL11"/>
    <property type="match status" value="1"/>
</dbReference>
<dbReference type="InterPro" id="IPR000911">
    <property type="entry name" value="Ribosomal_uL11"/>
</dbReference>
<dbReference type="InterPro" id="IPR006519">
    <property type="entry name" value="Ribosomal_uL11_bac-typ"/>
</dbReference>
<dbReference type="InterPro" id="IPR020783">
    <property type="entry name" value="Ribosomal_uL11_C"/>
</dbReference>
<dbReference type="InterPro" id="IPR036769">
    <property type="entry name" value="Ribosomal_uL11_C_sf"/>
</dbReference>
<dbReference type="InterPro" id="IPR020785">
    <property type="entry name" value="Ribosomal_uL11_CS"/>
</dbReference>
<dbReference type="InterPro" id="IPR020784">
    <property type="entry name" value="Ribosomal_uL11_N"/>
</dbReference>
<dbReference type="InterPro" id="IPR036796">
    <property type="entry name" value="Ribosomal_uL11_N_sf"/>
</dbReference>
<dbReference type="NCBIfam" id="TIGR01632">
    <property type="entry name" value="L11_bact"/>
    <property type="match status" value="1"/>
</dbReference>
<dbReference type="PANTHER" id="PTHR11661">
    <property type="entry name" value="60S RIBOSOMAL PROTEIN L12"/>
    <property type="match status" value="1"/>
</dbReference>
<dbReference type="PANTHER" id="PTHR11661:SF1">
    <property type="entry name" value="LARGE RIBOSOMAL SUBUNIT PROTEIN UL11M"/>
    <property type="match status" value="1"/>
</dbReference>
<dbReference type="Pfam" id="PF00298">
    <property type="entry name" value="Ribosomal_L11"/>
    <property type="match status" value="1"/>
</dbReference>
<dbReference type="Pfam" id="PF03946">
    <property type="entry name" value="Ribosomal_L11_N"/>
    <property type="match status" value="1"/>
</dbReference>
<dbReference type="SMART" id="SM00649">
    <property type="entry name" value="RL11"/>
    <property type="match status" value="1"/>
</dbReference>
<dbReference type="SUPFAM" id="SSF54747">
    <property type="entry name" value="Ribosomal L11/L12e N-terminal domain"/>
    <property type="match status" value="1"/>
</dbReference>
<dbReference type="SUPFAM" id="SSF46906">
    <property type="entry name" value="Ribosomal protein L11, C-terminal domain"/>
    <property type="match status" value="1"/>
</dbReference>
<dbReference type="PROSITE" id="PS00359">
    <property type="entry name" value="RIBOSOMAL_L11"/>
    <property type="match status" value="1"/>
</dbReference>
<accession>Q9JX02</accession>
<accession>A1IP07</accession>
<name>RL11_NEIMA</name>
<evidence type="ECO:0000255" key="1">
    <source>
        <dbReference type="HAMAP-Rule" id="MF_00736"/>
    </source>
</evidence>
<evidence type="ECO:0000305" key="2"/>
<sequence>MAKKIIGYIKLQIPAGKANPSPPVGPALGQRGLNIMEFCKAFNAATQGMEPGLPIPVVITAFADKSFTFVMKTPPASILLKKAAGLQKGSSNPLTNKVGKLTRAQLEEIAKTKEPDLTAADLDAAVRTIAGSARSMGLDVEGVV</sequence>
<feature type="chain" id="PRO_0000104326" description="Large ribosomal subunit protein uL11">
    <location>
        <begin position="1"/>
        <end position="144"/>
    </location>
</feature>
<keyword id="KW-0488">Methylation</keyword>
<keyword id="KW-0687">Ribonucleoprotein</keyword>
<keyword id="KW-0689">Ribosomal protein</keyword>
<keyword id="KW-0694">RNA-binding</keyword>
<keyword id="KW-0699">rRNA-binding</keyword>
<reference key="1">
    <citation type="journal article" date="2000" name="Nature">
        <title>Complete DNA sequence of a serogroup A strain of Neisseria meningitidis Z2491.</title>
        <authorList>
            <person name="Parkhill J."/>
            <person name="Achtman M."/>
            <person name="James K.D."/>
            <person name="Bentley S.D."/>
            <person name="Churcher C.M."/>
            <person name="Klee S.R."/>
            <person name="Morelli G."/>
            <person name="Basham D."/>
            <person name="Brown D."/>
            <person name="Chillingworth T."/>
            <person name="Davies R.M."/>
            <person name="Davis P."/>
            <person name="Devlin K."/>
            <person name="Feltwell T."/>
            <person name="Hamlin N."/>
            <person name="Holroyd S."/>
            <person name="Jagels K."/>
            <person name="Leather S."/>
            <person name="Moule S."/>
            <person name="Mungall K.L."/>
            <person name="Quail M.A."/>
            <person name="Rajandream M.A."/>
            <person name="Rutherford K.M."/>
            <person name="Simmonds M."/>
            <person name="Skelton J."/>
            <person name="Whitehead S."/>
            <person name="Spratt B.G."/>
            <person name="Barrell B.G."/>
        </authorList>
    </citation>
    <scope>NUCLEOTIDE SEQUENCE [LARGE SCALE GENOMIC DNA]</scope>
    <source>
        <strain>DSM 15465 / Z2491</strain>
    </source>
</reference>
<protein>
    <recommendedName>
        <fullName evidence="1">Large ribosomal subunit protein uL11</fullName>
    </recommendedName>
    <alternativeName>
        <fullName evidence="2">50S ribosomal protein L11</fullName>
    </alternativeName>
</protein>
<proteinExistence type="inferred from homology"/>
<gene>
    <name evidence="1" type="primary">rplK</name>
    <name type="ordered locus">NMA0146</name>
</gene>